<feature type="chain" id="PRO_0000337963" description="Cell cycle protein GpsB">
    <location>
        <begin position="1"/>
        <end position="108"/>
    </location>
</feature>
<feature type="coiled-coil region" evidence="1">
    <location>
        <begin position="32"/>
        <end position="69"/>
    </location>
</feature>
<sequence length="108" mass="12445">MTSIIYSPKDIFEQEFKTSMRGFDKKEVDEFLDNVIKDYENFNAQIEALKAENEALKKAKFQARNTVSATVQQPVPQPTRVAQSATNFDILKRISKLEKEVFGKQIIE</sequence>
<proteinExistence type="inferred from homology"/>
<gene>
    <name evidence="1" type="primary">gpsB</name>
    <name type="ordered locus">MGAS10750_Spy1461</name>
</gene>
<evidence type="ECO:0000255" key="1">
    <source>
        <dbReference type="HAMAP-Rule" id="MF_02011"/>
    </source>
</evidence>
<protein>
    <recommendedName>
        <fullName evidence="1">Cell cycle protein GpsB</fullName>
    </recommendedName>
    <alternativeName>
        <fullName evidence="1">Guiding PBP1-shuttling protein</fullName>
    </alternativeName>
</protein>
<reference key="1">
    <citation type="journal article" date="2006" name="Proc. Natl. Acad. Sci. U.S.A.">
        <title>Molecular genetic anatomy of inter- and intraserotype variation in the human bacterial pathogen group A Streptococcus.</title>
        <authorList>
            <person name="Beres S.B."/>
            <person name="Richter E.W."/>
            <person name="Nagiec M.J."/>
            <person name="Sumby P."/>
            <person name="Porcella S.F."/>
            <person name="DeLeo F.R."/>
            <person name="Musser J.M."/>
        </authorList>
    </citation>
    <scope>NUCLEOTIDE SEQUENCE [LARGE SCALE GENOMIC DNA]</scope>
    <source>
        <strain>MGAS10750</strain>
    </source>
</reference>
<name>GPSB_STRPF</name>
<comment type="function">
    <text evidence="1">Divisome component that associates with the complex late in its assembly, after the Z-ring is formed, and is dependent on DivIC and PBP2B for its recruitment to the divisome. Together with EzrA, is a key component of the system that regulates PBP1 localization during cell cycle progression. Its main role could be the removal of PBP1 from the cell pole after pole maturation is completed. Also contributes to the recruitment of PBP1 to the division complex. Not essential for septum formation.</text>
</comment>
<comment type="subunit">
    <text evidence="1">Forms polymers through the coiled coil domains. Interacts with PBP1, MreC and EzrA.</text>
</comment>
<comment type="subcellular location">
    <subcellularLocation>
        <location evidence="1">Cytoplasm</location>
    </subcellularLocation>
    <text evidence="1">Shuttles between the lateral wall and the division site in a cell cycle-dependent manner.</text>
</comment>
<comment type="similarity">
    <text evidence="1">Belongs to the GpsB family.</text>
</comment>
<dbReference type="EMBL" id="CP000262">
    <property type="protein sequence ID" value="ABF38411.1"/>
    <property type="molecule type" value="Genomic_DNA"/>
</dbReference>
<dbReference type="SMR" id="Q1J5H5"/>
<dbReference type="KEGG" id="spi:MGAS10750_Spy1461"/>
<dbReference type="HOGENOM" id="CLU_140309_1_0_9"/>
<dbReference type="Proteomes" id="UP000002434">
    <property type="component" value="Chromosome"/>
</dbReference>
<dbReference type="GO" id="GO:0005737">
    <property type="term" value="C:cytoplasm"/>
    <property type="evidence" value="ECO:0007669"/>
    <property type="project" value="UniProtKB-SubCell"/>
</dbReference>
<dbReference type="GO" id="GO:0051301">
    <property type="term" value="P:cell division"/>
    <property type="evidence" value="ECO:0007669"/>
    <property type="project" value="UniProtKB-UniRule"/>
</dbReference>
<dbReference type="GO" id="GO:0008360">
    <property type="term" value="P:regulation of cell shape"/>
    <property type="evidence" value="ECO:0007669"/>
    <property type="project" value="UniProtKB-UniRule"/>
</dbReference>
<dbReference type="Gene3D" id="6.10.250.660">
    <property type="match status" value="1"/>
</dbReference>
<dbReference type="HAMAP" id="MF_02011">
    <property type="entry name" value="GpsB"/>
    <property type="match status" value="1"/>
</dbReference>
<dbReference type="InterPro" id="IPR011229">
    <property type="entry name" value="Cell_cycle_GpsB"/>
</dbReference>
<dbReference type="InterPro" id="IPR019933">
    <property type="entry name" value="DivIVA_domain"/>
</dbReference>
<dbReference type="InterPro" id="IPR007793">
    <property type="entry name" value="DivIVA_fam"/>
</dbReference>
<dbReference type="NCBIfam" id="TIGR03544">
    <property type="entry name" value="DivI1A_domain"/>
    <property type="match status" value="1"/>
</dbReference>
<dbReference type="NCBIfam" id="NF010725">
    <property type="entry name" value="PRK14127.1"/>
    <property type="match status" value="1"/>
</dbReference>
<dbReference type="PANTHER" id="PTHR35794:SF1">
    <property type="entry name" value="CELL CYCLE PROTEIN GPSB"/>
    <property type="match status" value="1"/>
</dbReference>
<dbReference type="PANTHER" id="PTHR35794">
    <property type="entry name" value="CELL DIVISION PROTEIN DIVIVA"/>
    <property type="match status" value="1"/>
</dbReference>
<dbReference type="Pfam" id="PF05103">
    <property type="entry name" value="DivIVA"/>
    <property type="match status" value="1"/>
</dbReference>
<dbReference type="PIRSF" id="PIRSF029938">
    <property type="entry name" value="UCP029938"/>
    <property type="match status" value="1"/>
</dbReference>
<organism>
    <name type="scientific">Streptococcus pyogenes serotype M4 (strain MGAS10750)</name>
    <dbReference type="NCBI Taxonomy" id="370554"/>
    <lineage>
        <taxon>Bacteria</taxon>
        <taxon>Bacillati</taxon>
        <taxon>Bacillota</taxon>
        <taxon>Bacilli</taxon>
        <taxon>Lactobacillales</taxon>
        <taxon>Streptococcaceae</taxon>
        <taxon>Streptococcus</taxon>
    </lineage>
</organism>
<keyword id="KW-0131">Cell cycle</keyword>
<keyword id="KW-0132">Cell division</keyword>
<keyword id="KW-0133">Cell shape</keyword>
<keyword id="KW-0175">Coiled coil</keyword>
<keyword id="KW-0963">Cytoplasm</keyword>
<accession>Q1J5H5</accession>